<name>IF2_CLOBJ</name>
<proteinExistence type="inferred from homology"/>
<protein>
    <recommendedName>
        <fullName evidence="2">Translation initiation factor IF-2</fullName>
    </recommendedName>
</protein>
<keyword id="KW-0963">Cytoplasm</keyword>
<keyword id="KW-0342">GTP-binding</keyword>
<keyword id="KW-0396">Initiation factor</keyword>
<keyword id="KW-0547">Nucleotide-binding</keyword>
<keyword id="KW-0648">Protein biosynthesis</keyword>
<dbReference type="EMBL" id="CP001581">
    <property type="protein sequence ID" value="ACO84307.1"/>
    <property type="molecule type" value="Genomic_DNA"/>
</dbReference>
<dbReference type="RefSeq" id="WP_012704158.1">
    <property type="nucleotide sequence ID" value="NC_012563.1"/>
</dbReference>
<dbReference type="SMR" id="C1FS59"/>
<dbReference type="KEGG" id="cby:CLM_2711"/>
<dbReference type="eggNOG" id="COG0532">
    <property type="taxonomic scope" value="Bacteria"/>
</dbReference>
<dbReference type="HOGENOM" id="CLU_006301_5_1_9"/>
<dbReference type="Proteomes" id="UP000001374">
    <property type="component" value="Chromosome"/>
</dbReference>
<dbReference type="GO" id="GO:0005829">
    <property type="term" value="C:cytosol"/>
    <property type="evidence" value="ECO:0007669"/>
    <property type="project" value="TreeGrafter"/>
</dbReference>
<dbReference type="GO" id="GO:0005525">
    <property type="term" value="F:GTP binding"/>
    <property type="evidence" value="ECO:0007669"/>
    <property type="project" value="UniProtKB-KW"/>
</dbReference>
<dbReference type="GO" id="GO:0003924">
    <property type="term" value="F:GTPase activity"/>
    <property type="evidence" value="ECO:0007669"/>
    <property type="project" value="UniProtKB-UniRule"/>
</dbReference>
<dbReference type="GO" id="GO:0003743">
    <property type="term" value="F:translation initiation factor activity"/>
    <property type="evidence" value="ECO:0007669"/>
    <property type="project" value="UniProtKB-UniRule"/>
</dbReference>
<dbReference type="CDD" id="cd01887">
    <property type="entry name" value="IF2_eIF5B"/>
    <property type="match status" value="1"/>
</dbReference>
<dbReference type="CDD" id="cd03702">
    <property type="entry name" value="IF2_mtIF2_II"/>
    <property type="match status" value="1"/>
</dbReference>
<dbReference type="CDD" id="cd03692">
    <property type="entry name" value="mtIF2_IVc"/>
    <property type="match status" value="1"/>
</dbReference>
<dbReference type="FunFam" id="2.40.30.10:FF:000007">
    <property type="entry name" value="Translation initiation factor IF-2"/>
    <property type="match status" value="1"/>
</dbReference>
<dbReference type="FunFam" id="2.40.30.10:FF:000008">
    <property type="entry name" value="Translation initiation factor IF-2"/>
    <property type="match status" value="1"/>
</dbReference>
<dbReference type="FunFam" id="3.40.50.10050:FF:000001">
    <property type="entry name" value="Translation initiation factor IF-2"/>
    <property type="match status" value="1"/>
</dbReference>
<dbReference type="FunFam" id="3.40.50.300:FF:000019">
    <property type="entry name" value="Translation initiation factor IF-2"/>
    <property type="match status" value="1"/>
</dbReference>
<dbReference type="Gene3D" id="1.10.10.2480">
    <property type="match status" value="1"/>
</dbReference>
<dbReference type="Gene3D" id="3.40.50.300">
    <property type="entry name" value="P-loop containing nucleotide triphosphate hydrolases"/>
    <property type="match status" value="1"/>
</dbReference>
<dbReference type="Gene3D" id="2.40.30.10">
    <property type="entry name" value="Translation factors"/>
    <property type="match status" value="2"/>
</dbReference>
<dbReference type="Gene3D" id="3.40.50.10050">
    <property type="entry name" value="Translation initiation factor IF- 2, domain 3"/>
    <property type="match status" value="1"/>
</dbReference>
<dbReference type="HAMAP" id="MF_00100_B">
    <property type="entry name" value="IF_2_B"/>
    <property type="match status" value="1"/>
</dbReference>
<dbReference type="InterPro" id="IPR053905">
    <property type="entry name" value="EF-G-like_DII"/>
</dbReference>
<dbReference type="InterPro" id="IPR044145">
    <property type="entry name" value="IF2_II"/>
</dbReference>
<dbReference type="InterPro" id="IPR006847">
    <property type="entry name" value="IF2_N"/>
</dbReference>
<dbReference type="InterPro" id="IPR027417">
    <property type="entry name" value="P-loop_NTPase"/>
</dbReference>
<dbReference type="InterPro" id="IPR005225">
    <property type="entry name" value="Small_GTP-bd"/>
</dbReference>
<dbReference type="InterPro" id="IPR000795">
    <property type="entry name" value="T_Tr_GTP-bd_dom"/>
</dbReference>
<dbReference type="InterPro" id="IPR000178">
    <property type="entry name" value="TF_IF2_bacterial-like"/>
</dbReference>
<dbReference type="InterPro" id="IPR015760">
    <property type="entry name" value="TIF_IF2"/>
</dbReference>
<dbReference type="InterPro" id="IPR023115">
    <property type="entry name" value="TIF_IF2_dom3"/>
</dbReference>
<dbReference type="InterPro" id="IPR036925">
    <property type="entry name" value="TIF_IF2_dom3_sf"/>
</dbReference>
<dbReference type="InterPro" id="IPR009000">
    <property type="entry name" value="Transl_B-barrel_sf"/>
</dbReference>
<dbReference type="NCBIfam" id="TIGR00487">
    <property type="entry name" value="IF-2"/>
    <property type="match status" value="1"/>
</dbReference>
<dbReference type="NCBIfam" id="TIGR00231">
    <property type="entry name" value="small_GTP"/>
    <property type="match status" value="1"/>
</dbReference>
<dbReference type="PANTHER" id="PTHR43381:SF5">
    <property type="entry name" value="TR-TYPE G DOMAIN-CONTAINING PROTEIN"/>
    <property type="match status" value="1"/>
</dbReference>
<dbReference type="PANTHER" id="PTHR43381">
    <property type="entry name" value="TRANSLATION INITIATION FACTOR IF-2-RELATED"/>
    <property type="match status" value="1"/>
</dbReference>
<dbReference type="Pfam" id="PF22042">
    <property type="entry name" value="EF-G_D2"/>
    <property type="match status" value="1"/>
</dbReference>
<dbReference type="Pfam" id="PF00009">
    <property type="entry name" value="GTP_EFTU"/>
    <property type="match status" value="1"/>
</dbReference>
<dbReference type="Pfam" id="PF11987">
    <property type="entry name" value="IF-2"/>
    <property type="match status" value="1"/>
</dbReference>
<dbReference type="Pfam" id="PF04760">
    <property type="entry name" value="IF2_N"/>
    <property type="match status" value="2"/>
</dbReference>
<dbReference type="SUPFAM" id="SSF52156">
    <property type="entry name" value="Initiation factor IF2/eIF5b, domain 3"/>
    <property type="match status" value="1"/>
</dbReference>
<dbReference type="SUPFAM" id="SSF52540">
    <property type="entry name" value="P-loop containing nucleoside triphosphate hydrolases"/>
    <property type="match status" value="1"/>
</dbReference>
<dbReference type="SUPFAM" id="SSF50447">
    <property type="entry name" value="Translation proteins"/>
    <property type="match status" value="2"/>
</dbReference>
<dbReference type="PROSITE" id="PS51722">
    <property type="entry name" value="G_TR_2"/>
    <property type="match status" value="1"/>
</dbReference>
<dbReference type="PROSITE" id="PS01176">
    <property type="entry name" value="IF2"/>
    <property type="match status" value="1"/>
</dbReference>
<organism>
    <name type="scientific">Clostridium botulinum (strain Kyoto / Type A2)</name>
    <dbReference type="NCBI Taxonomy" id="536232"/>
    <lineage>
        <taxon>Bacteria</taxon>
        <taxon>Bacillati</taxon>
        <taxon>Bacillota</taxon>
        <taxon>Clostridia</taxon>
        <taxon>Eubacteriales</taxon>
        <taxon>Clostridiaceae</taxon>
        <taxon>Clostridium</taxon>
    </lineage>
</organism>
<comment type="function">
    <text evidence="2">One of the essential components for the initiation of protein synthesis. Protects formylmethionyl-tRNA from spontaneous hydrolysis and promotes its binding to the 30S ribosomal subunits. Also involved in the hydrolysis of GTP during the formation of the 70S ribosomal complex.</text>
</comment>
<comment type="subcellular location">
    <subcellularLocation>
        <location evidence="2">Cytoplasm</location>
    </subcellularLocation>
</comment>
<comment type="similarity">
    <text evidence="2">Belongs to the TRAFAC class translation factor GTPase superfamily. Classic translation factor GTPase family. IF-2 subfamily.</text>
</comment>
<feature type="chain" id="PRO_1000118755" description="Translation initiation factor IF-2">
    <location>
        <begin position="1"/>
        <end position="688"/>
    </location>
</feature>
<feature type="domain" description="tr-type G">
    <location>
        <begin position="187"/>
        <end position="354"/>
    </location>
</feature>
<feature type="region of interest" description="Disordered" evidence="3">
    <location>
        <begin position="53"/>
        <end position="100"/>
    </location>
</feature>
<feature type="region of interest" description="G1" evidence="1">
    <location>
        <begin position="196"/>
        <end position="203"/>
    </location>
</feature>
<feature type="region of interest" description="G2" evidence="1">
    <location>
        <begin position="221"/>
        <end position="225"/>
    </location>
</feature>
<feature type="region of interest" description="G3" evidence="1">
    <location>
        <begin position="242"/>
        <end position="245"/>
    </location>
</feature>
<feature type="region of interest" description="G4" evidence="1">
    <location>
        <begin position="296"/>
        <end position="299"/>
    </location>
</feature>
<feature type="region of interest" description="G5" evidence="1">
    <location>
        <begin position="332"/>
        <end position="334"/>
    </location>
</feature>
<feature type="compositionally biased region" description="Basic and acidic residues" evidence="3">
    <location>
        <begin position="53"/>
        <end position="62"/>
    </location>
</feature>
<feature type="compositionally biased region" description="Basic and acidic residues" evidence="3">
    <location>
        <begin position="86"/>
        <end position="95"/>
    </location>
</feature>
<feature type="binding site" evidence="2">
    <location>
        <begin position="196"/>
        <end position="203"/>
    </location>
    <ligand>
        <name>GTP</name>
        <dbReference type="ChEBI" id="CHEBI:37565"/>
    </ligand>
</feature>
<feature type="binding site" evidence="2">
    <location>
        <begin position="242"/>
        <end position="246"/>
    </location>
    <ligand>
        <name>GTP</name>
        <dbReference type="ChEBI" id="CHEBI:37565"/>
    </ligand>
</feature>
<feature type="binding site" evidence="2">
    <location>
        <begin position="296"/>
        <end position="299"/>
    </location>
    <ligand>
        <name>GTP</name>
        <dbReference type="ChEBI" id="CHEBI:37565"/>
    </ligand>
</feature>
<gene>
    <name evidence="2" type="primary">infB</name>
    <name type="ordered locus">CLM_2711</name>
</gene>
<evidence type="ECO:0000250" key="1"/>
<evidence type="ECO:0000255" key="2">
    <source>
        <dbReference type="HAMAP-Rule" id="MF_00100"/>
    </source>
</evidence>
<evidence type="ECO:0000256" key="3">
    <source>
        <dbReference type="SAM" id="MobiDB-lite"/>
    </source>
</evidence>
<accession>C1FS59</accession>
<reference key="1">
    <citation type="submission" date="2008-10" db="EMBL/GenBank/DDBJ databases">
        <title>Genome sequence of Clostridium botulinum A2 Kyoto.</title>
        <authorList>
            <person name="Shrivastava S."/>
            <person name="Brinkac L.M."/>
            <person name="Brown J.L."/>
            <person name="Bruce D."/>
            <person name="Detter C.C."/>
            <person name="Johnson E.A."/>
            <person name="Munk C.A."/>
            <person name="Smith L.A."/>
            <person name="Smith T.J."/>
            <person name="Sutton G."/>
            <person name="Brettin T.S."/>
        </authorList>
    </citation>
    <scope>NUCLEOTIDE SEQUENCE [LARGE SCALE GENOMIC DNA]</scope>
    <source>
        <strain>Kyoto / Type A2</strain>
    </source>
</reference>
<sequence>MAKIRVYELAKELNISSKELITLLEEEFSVEVKNHMSAIEDEDANLIKELLSGKEKSEKTKEEDDEIETTAKNPIKESMNNKKSNKRDDKNEKVNTENAEDMGIITMTSDTITVKEISDKLEKSYAEVIKELMLMGVMASVNQEINFEMAEKLAAKFDMEILKEDEDEKEDLEDILKDNEEEEYLQKRSPIITVMGHVDHGKTSLLDAIRKSKITSTEAGGITQHIGAYTVELNGEAITFLDTPGHAAFTAMRARGAQVTDIVILVVAADDGIMPQTQEAISHCKAANVPLIVAINKIDRPGANIDKVKQELTEYGLVAEDWGGDTICVPVSAHTKEGIDDLLEMILLSSEILELKANPNRKAKGTVVEAKLDKGRGPVATLLIQNGTLRVGDSIVVGSTYGRIRAMFNDKGRNIESAGPSTPVEILGLSEVPEAGDKFYQVKEEKTARGIADKRKEKIRDEYLQSTHKVSLEDLYNQIQEGTVKELGLIVKADVQGSVEALKQSLEKLSTEEVKVRVIHGGVGAINETDVTLATASNGIILGFNVRPDNNAIIASERDGVDIKTYRVIYDAIEDIKSAMLGMLEPEFKEVVIGTAEVRQVYKISSVGTIAGAYIQTGKLARNAGARVIRDGIVIFESELASLKRFKDDAKEVAQGYECGLSIEKFNDIKEGDIIECFIMEEIKKKTL</sequence>